<gene>
    <name evidence="1" type="primary">glyQ</name>
    <name type="ordered locus">MGAS2096_Spy1408</name>
</gene>
<reference key="1">
    <citation type="journal article" date="2006" name="Proc. Natl. Acad. Sci. U.S.A.">
        <title>Molecular genetic anatomy of inter- and intraserotype variation in the human bacterial pathogen group A Streptococcus.</title>
        <authorList>
            <person name="Beres S.B."/>
            <person name="Richter E.W."/>
            <person name="Nagiec M.J."/>
            <person name="Sumby P."/>
            <person name="Porcella S.F."/>
            <person name="DeLeo F.R."/>
            <person name="Musser J.M."/>
        </authorList>
    </citation>
    <scope>NUCLEOTIDE SEQUENCE [LARGE SCALE GENOMIC DNA]</scope>
    <source>
        <strain>MGAS2096</strain>
    </source>
</reference>
<comment type="catalytic activity">
    <reaction evidence="1">
        <text>tRNA(Gly) + glycine + ATP = glycyl-tRNA(Gly) + AMP + diphosphate</text>
        <dbReference type="Rhea" id="RHEA:16013"/>
        <dbReference type="Rhea" id="RHEA-COMP:9664"/>
        <dbReference type="Rhea" id="RHEA-COMP:9683"/>
        <dbReference type="ChEBI" id="CHEBI:30616"/>
        <dbReference type="ChEBI" id="CHEBI:33019"/>
        <dbReference type="ChEBI" id="CHEBI:57305"/>
        <dbReference type="ChEBI" id="CHEBI:78442"/>
        <dbReference type="ChEBI" id="CHEBI:78522"/>
        <dbReference type="ChEBI" id="CHEBI:456215"/>
        <dbReference type="EC" id="6.1.1.14"/>
    </reaction>
</comment>
<comment type="subunit">
    <text evidence="1">Tetramer of two alpha and two beta subunits.</text>
</comment>
<comment type="subcellular location">
    <subcellularLocation>
        <location evidence="1">Cytoplasm</location>
    </subcellularLocation>
</comment>
<comment type="similarity">
    <text evidence="1">Belongs to the class-II aminoacyl-tRNA synthetase family.</text>
</comment>
<sequence length="305" mass="34799">MSKKLTFQEIILTLQQYWNDQGCMLMQAYDNEKGAGTMSPYTFLRAIGPEPWNAAYVEPSRRPADGRYGENPNRLYQHHQFQVVMKPSPSNIQELYLASLEKLGINPLEHDIRFVEDNWENPSTGSAGLGWEVWLDGMEITQFTYFQQVGGLATSPVTAEVTYGLERLASYIQEVDSVYDIEWAPGVKYGEIFLQPEYEHSKYSFEISDQDMLLENFEKFEKEASRALEEGLVHPAYDYVLKCSHTFNLLDARGAVSVTERAGYIARIRNLARVVAKTFVAERKKLGLPLLDEATRAILLAEDDE</sequence>
<organism>
    <name type="scientific">Streptococcus pyogenes serotype M12 (strain MGAS2096)</name>
    <dbReference type="NCBI Taxonomy" id="370553"/>
    <lineage>
        <taxon>Bacteria</taxon>
        <taxon>Bacillati</taxon>
        <taxon>Bacillota</taxon>
        <taxon>Bacilli</taxon>
        <taxon>Lactobacillales</taxon>
        <taxon>Streptococcaceae</taxon>
        <taxon>Streptococcus</taxon>
    </lineage>
</organism>
<dbReference type="EC" id="6.1.1.14" evidence="1"/>
<dbReference type="EMBL" id="CP000261">
    <property type="protein sequence ID" value="ABF36460.1"/>
    <property type="molecule type" value="Genomic_DNA"/>
</dbReference>
<dbReference type="SMR" id="Q1JAE8"/>
<dbReference type="KEGG" id="spj:MGAS2096_Spy1408"/>
<dbReference type="HOGENOM" id="CLU_057066_1_0_9"/>
<dbReference type="GO" id="GO:0005829">
    <property type="term" value="C:cytosol"/>
    <property type="evidence" value="ECO:0007669"/>
    <property type="project" value="TreeGrafter"/>
</dbReference>
<dbReference type="GO" id="GO:0005524">
    <property type="term" value="F:ATP binding"/>
    <property type="evidence" value="ECO:0007669"/>
    <property type="project" value="UniProtKB-UniRule"/>
</dbReference>
<dbReference type="GO" id="GO:0140096">
    <property type="term" value="F:catalytic activity, acting on a protein"/>
    <property type="evidence" value="ECO:0007669"/>
    <property type="project" value="UniProtKB-ARBA"/>
</dbReference>
<dbReference type="GO" id="GO:0004820">
    <property type="term" value="F:glycine-tRNA ligase activity"/>
    <property type="evidence" value="ECO:0007669"/>
    <property type="project" value="UniProtKB-UniRule"/>
</dbReference>
<dbReference type="GO" id="GO:0016740">
    <property type="term" value="F:transferase activity"/>
    <property type="evidence" value="ECO:0007669"/>
    <property type="project" value="UniProtKB-ARBA"/>
</dbReference>
<dbReference type="GO" id="GO:0006426">
    <property type="term" value="P:glycyl-tRNA aminoacylation"/>
    <property type="evidence" value="ECO:0007669"/>
    <property type="project" value="UniProtKB-UniRule"/>
</dbReference>
<dbReference type="CDD" id="cd00733">
    <property type="entry name" value="GlyRS_alpha_core"/>
    <property type="match status" value="1"/>
</dbReference>
<dbReference type="FunFam" id="3.30.930.10:FF:000006">
    <property type="entry name" value="Glycine--tRNA ligase alpha subunit"/>
    <property type="match status" value="1"/>
</dbReference>
<dbReference type="Gene3D" id="3.30.930.10">
    <property type="entry name" value="Bira Bifunctional Protein, Domain 2"/>
    <property type="match status" value="1"/>
</dbReference>
<dbReference type="Gene3D" id="1.20.58.180">
    <property type="entry name" value="Class II aaRS and biotin synthetases, domain 2"/>
    <property type="match status" value="1"/>
</dbReference>
<dbReference type="HAMAP" id="MF_00254">
    <property type="entry name" value="Gly_tRNA_synth_alpha"/>
    <property type="match status" value="1"/>
</dbReference>
<dbReference type="InterPro" id="IPR045864">
    <property type="entry name" value="aa-tRNA-synth_II/BPL/LPL"/>
</dbReference>
<dbReference type="InterPro" id="IPR006194">
    <property type="entry name" value="Gly-tRNA-synth_heterodimer"/>
</dbReference>
<dbReference type="InterPro" id="IPR002310">
    <property type="entry name" value="Gly-tRNA_ligase_asu"/>
</dbReference>
<dbReference type="NCBIfam" id="TIGR00388">
    <property type="entry name" value="glyQ"/>
    <property type="match status" value="1"/>
</dbReference>
<dbReference type="NCBIfam" id="NF006827">
    <property type="entry name" value="PRK09348.1"/>
    <property type="match status" value="1"/>
</dbReference>
<dbReference type="PANTHER" id="PTHR30075:SF2">
    <property type="entry name" value="GLYCINE--TRNA LIGASE, CHLOROPLASTIC_MITOCHONDRIAL 2"/>
    <property type="match status" value="1"/>
</dbReference>
<dbReference type="PANTHER" id="PTHR30075">
    <property type="entry name" value="GLYCYL-TRNA SYNTHETASE"/>
    <property type="match status" value="1"/>
</dbReference>
<dbReference type="Pfam" id="PF02091">
    <property type="entry name" value="tRNA-synt_2e"/>
    <property type="match status" value="1"/>
</dbReference>
<dbReference type="PRINTS" id="PR01044">
    <property type="entry name" value="TRNASYNTHGA"/>
</dbReference>
<dbReference type="SUPFAM" id="SSF55681">
    <property type="entry name" value="Class II aaRS and biotin synthetases"/>
    <property type="match status" value="1"/>
</dbReference>
<dbReference type="PROSITE" id="PS50861">
    <property type="entry name" value="AA_TRNA_LIGASE_II_GLYAB"/>
    <property type="match status" value="1"/>
</dbReference>
<feature type="chain" id="PRO_1000047500" description="Glycine--tRNA ligase alpha subunit">
    <location>
        <begin position="1"/>
        <end position="305"/>
    </location>
</feature>
<keyword id="KW-0030">Aminoacyl-tRNA synthetase</keyword>
<keyword id="KW-0067">ATP-binding</keyword>
<keyword id="KW-0963">Cytoplasm</keyword>
<keyword id="KW-0436">Ligase</keyword>
<keyword id="KW-0547">Nucleotide-binding</keyword>
<keyword id="KW-0648">Protein biosynthesis</keyword>
<protein>
    <recommendedName>
        <fullName evidence="1">Glycine--tRNA ligase alpha subunit</fullName>
        <ecNumber evidence="1">6.1.1.14</ecNumber>
    </recommendedName>
    <alternativeName>
        <fullName evidence="1">Glycyl-tRNA synthetase alpha subunit</fullName>
        <shortName evidence="1">GlyRS</shortName>
    </alternativeName>
</protein>
<evidence type="ECO:0000255" key="1">
    <source>
        <dbReference type="HAMAP-Rule" id="MF_00254"/>
    </source>
</evidence>
<name>SYGA_STRPB</name>
<proteinExistence type="inferred from homology"/>
<accession>Q1JAE8</accession>